<gene>
    <name type="primary">al</name>
    <name type="ORF">CG3935</name>
</gene>
<reference key="1">
    <citation type="journal article" date="1993" name="Genes Dev.">
        <title>Molecular genetics of aristaless, a prd-type homeo box gene involved in the morphogenesis of proximal and distal pattern elements in a subset of appendages in Drosophila.</title>
        <authorList>
            <person name="Schneitz K."/>
            <person name="Spielmann P."/>
            <person name="Noll M."/>
        </authorList>
    </citation>
    <scope>NUCLEOTIDE SEQUENCE [MRNA]</scope>
    <scope>FUNCTION</scope>
    <scope>TISSUE SPECIFICITY</scope>
    <scope>DEVELOPMENTAL STAGE</scope>
    <scope>DISRUPTION PHENOTYPE</scope>
    <source>
        <tissue>Embryo</tissue>
    </source>
</reference>
<reference key="2">
    <citation type="journal article" date="2000" name="Science">
        <title>The genome sequence of Drosophila melanogaster.</title>
        <authorList>
            <person name="Adams M.D."/>
            <person name="Celniker S.E."/>
            <person name="Holt R.A."/>
            <person name="Evans C.A."/>
            <person name="Gocayne J.D."/>
            <person name="Amanatides P.G."/>
            <person name="Scherer S.E."/>
            <person name="Li P.W."/>
            <person name="Hoskins R.A."/>
            <person name="Galle R.F."/>
            <person name="George R.A."/>
            <person name="Lewis S.E."/>
            <person name="Richards S."/>
            <person name="Ashburner M."/>
            <person name="Henderson S.N."/>
            <person name="Sutton G.G."/>
            <person name="Wortman J.R."/>
            <person name="Yandell M.D."/>
            <person name="Zhang Q."/>
            <person name="Chen L.X."/>
            <person name="Brandon R.C."/>
            <person name="Rogers Y.-H.C."/>
            <person name="Blazej R.G."/>
            <person name="Champe M."/>
            <person name="Pfeiffer B.D."/>
            <person name="Wan K.H."/>
            <person name="Doyle C."/>
            <person name="Baxter E.G."/>
            <person name="Helt G."/>
            <person name="Nelson C.R."/>
            <person name="Miklos G.L.G."/>
            <person name="Abril J.F."/>
            <person name="Agbayani A."/>
            <person name="An H.-J."/>
            <person name="Andrews-Pfannkoch C."/>
            <person name="Baldwin D."/>
            <person name="Ballew R.M."/>
            <person name="Basu A."/>
            <person name="Baxendale J."/>
            <person name="Bayraktaroglu L."/>
            <person name="Beasley E.M."/>
            <person name="Beeson K.Y."/>
            <person name="Benos P.V."/>
            <person name="Berman B.P."/>
            <person name="Bhandari D."/>
            <person name="Bolshakov S."/>
            <person name="Borkova D."/>
            <person name="Botchan M.R."/>
            <person name="Bouck J."/>
            <person name="Brokstein P."/>
            <person name="Brottier P."/>
            <person name="Burtis K.C."/>
            <person name="Busam D.A."/>
            <person name="Butler H."/>
            <person name="Cadieu E."/>
            <person name="Center A."/>
            <person name="Chandra I."/>
            <person name="Cherry J.M."/>
            <person name="Cawley S."/>
            <person name="Dahlke C."/>
            <person name="Davenport L.B."/>
            <person name="Davies P."/>
            <person name="de Pablos B."/>
            <person name="Delcher A."/>
            <person name="Deng Z."/>
            <person name="Mays A.D."/>
            <person name="Dew I."/>
            <person name="Dietz S.M."/>
            <person name="Dodson K."/>
            <person name="Doup L.E."/>
            <person name="Downes M."/>
            <person name="Dugan-Rocha S."/>
            <person name="Dunkov B.C."/>
            <person name="Dunn P."/>
            <person name="Durbin K.J."/>
            <person name="Evangelista C.C."/>
            <person name="Ferraz C."/>
            <person name="Ferriera S."/>
            <person name="Fleischmann W."/>
            <person name="Fosler C."/>
            <person name="Gabrielian A.E."/>
            <person name="Garg N.S."/>
            <person name="Gelbart W.M."/>
            <person name="Glasser K."/>
            <person name="Glodek A."/>
            <person name="Gong F."/>
            <person name="Gorrell J.H."/>
            <person name="Gu Z."/>
            <person name="Guan P."/>
            <person name="Harris M."/>
            <person name="Harris N.L."/>
            <person name="Harvey D.A."/>
            <person name="Heiman T.J."/>
            <person name="Hernandez J.R."/>
            <person name="Houck J."/>
            <person name="Hostin D."/>
            <person name="Houston K.A."/>
            <person name="Howland T.J."/>
            <person name="Wei M.-H."/>
            <person name="Ibegwam C."/>
            <person name="Jalali M."/>
            <person name="Kalush F."/>
            <person name="Karpen G.H."/>
            <person name="Ke Z."/>
            <person name="Kennison J.A."/>
            <person name="Ketchum K.A."/>
            <person name="Kimmel B.E."/>
            <person name="Kodira C.D."/>
            <person name="Kraft C.L."/>
            <person name="Kravitz S."/>
            <person name="Kulp D."/>
            <person name="Lai Z."/>
            <person name="Lasko P."/>
            <person name="Lei Y."/>
            <person name="Levitsky A.A."/>
            <person name="Li J.H."/>
            <person name="Li Z."/>
            <person name="Liang Y."/>
            <person name="Lin X."/>
            <person name="Liu X."/>
            <person name="Mattei B."/>
            <person name="McIntosh T.C."/>
            <person name="McLeod M.P."/>
            <person name="McPherson D."/>
            <person name="Merkulov G."/>
            <person name="Milshina N.V."/>
            <person name="Mobarry C."/>
            <person name="Morris J."/>
            <person name="Moshrefi A."/>
            <person name="Mount S.M."/>
            <person name="Moy M."/>
            <person name="Murphy B."/>
            <person name="Murphy L."/>
            <person name="Muzny D.M."/>
            <person name="Nelson D.L."/>
            <person name="Nelson D.R."/>
            <person name="Nelson K.A."/>
            <person name="Nixon K."/>
            <person name="Nusskern D.R."/>
            <person name="Pacleb J.M."/>
            <person name="Palazzolo M."/>
            <person name="Pittman G.S."/>
            <person name="Pan S."/>
            <person name="Pollard J."/>
            <person name="Puri V."/>
            <person name="Reese M.G."/>
            <person name="Reinert K."/>
            <person name="Remington K."/>
            <person name="Saunders R.D.C."/>
            <person name="Scheeler F."/>
            <person name="Shen H."/>
            <person name="Shue B.C."/>
            <person name="Siden-Kiamos I."/>
            <person name="Simpson M."/>
            <person name="Skupski M.P."/>
            <person name="Smith T.J."/>
            <person name="Spier E."/>
            <person name="Spradling A.C."/>
            <person name="Stapleton M."/>
            <person name="Strong R."/>
            <person name="Sun E."/>
            <person name="Svirskas R."/>
            <person name="Tector C."/>
            <person name="Turner R."/>
            <person name="Venter E."/>
            <person name="Wang A.H."/>
            <person name="Wang X."/>
            <person name="Wang Z.-Y."/>
            <person name="Wassarman D.A."/>
            <person name="Weinstock G.M."/>
            <person name="Weissenbach J."/>
            <person name="Williams S.M."/>
            <person name="Woodage T."/>
            <person name="Worley K.C."/>
            <person name="Wu D."/>
            <person name="Yang S."/>
            <person name="Yao Q.A."/>
            <person name="Ye J."/>
            <person name="Yeh R.-F."/>
            <person name="Zaveri J.S."/>
            <person name="Zhan M."/>
            <person name="Zhang G."/>
            <person name="Zhao Q."/>
            <person name="Zheng L."/>
            <person name="Zheng X.H."/>
            <person name="Zhong F.N."/>
            <person name="Zhong W."/>
            <person name="Zhou X."/>
            <person name="Zhu S.C."/>
            <person name="Zhu X."/>
            <person name="Smith H.O."/>
            <person name="Gibbs R.A."/>
            <person name="Myers E.W."/>
            <person name="Rubin G.M."/>
            <person name="Venter J.C."/>
        </authorList>
    </citation>
    <scope>NUCLEOTIDE SEQUENCE [LARGE SCALE GENOMIC DNA]</scope>
    <source>
        <strain>Berkeley</strain>
    </source>
</reference>
<reference key="3">
    <citation type="journal article" date="2002" name="Genome Biol.">
        <title>Annotation of the Drosophila melanogaster euchromatic genome: a systematic review.</title>
        <authorList>
            <person name="Misra S."/>
            <person name="Crosby M.A."/>
            <person name="Mungall C.J."/>
            <person name="Matthews B.B."/>
            <person name="Campbell K.S."/>
            <person name="Hradecky P."/>
            <person name="Huang Y."/>
            <person name="Kaminker J.S."/>
            <person name="Millburn G.H."/>
            <person name="Prochnik S.E."/>
            <person name="Smith C.D."/>
            <person name="Tupy J.L."/>
            <person name="Whitfield E.J."/>
            <person name="Bayraktaroglu L."/>
            <person name="Berman B.P."/>
            <person name="Bettencourt B.R."/>
            <person name="Celniker S.E."/>
            <person name="de Grey A.D.N.J."/>
            <person name="Drysdale R.A."/>
            <person name="Harris N.L."/>
            <person name="Richter J."/>
            <person name="Russo S."/>
            <person name="Schroeder A.J."/>
            <person name="Shu S.Q."/>
            <person name="Stapleton M."/>
            <person name="Yamada C."/>
            <person name="Ashburner M."/>
            <person name="Gelbart W.M."/>
            <person name="Rubin G.M."/>
            <person name="Lewis S.E."/>
        </authorList>
    </citation>
    <scope>GENOME REANNOTATION</scope>
    <source>
        <strain>Berkeley</strain>
    </source>
</reference>
<reference key="4">
    <citation type="journal article" date="2002" name="Genome Biol.">
        <title>A Drosophila full-length cDNA resource.</title>
        <authorList>
            <person name="Stapleton M."/>
            <person name="Carlson J.W."/>
            <person name="Brokstein P."/>
            <person name="Yu C."/>
            <person name="Champe M."/>
            <person name="George R.A."/>
            <person name="Guarin H."/>
            <person name="Kronmiller B."/>
            <person name="Pacleb J.M."/>
            <person name="Park S."/>
            <person name="Wan K.H."/>
            <person name="Rubin G.M."/>
            <person name="Celniker S.E."/>
        </authorList>
    </citation>
    <scope>NUCLEOTIDE SEQUENCE [LARGE SCALE MRNA]</scope>
    <source>
        <strain>Berkeley</strain>
        <tissue>Embryo</tissue>
    </source>
</reference>
<keyword id="KW-0002">3D-structure</keyword>
<keyword id="KW-0217">Developmental protein</keyword>
<keyword id="KW-0238">DNA-binding</keyword>
<keyword id="KW-0371">Homeobox</keyword>
<keyword id="KW-0539">Nucleus</keyword>
<keyword id="KW-1185">Reference proteome</keyword>
<feature type="chain" id="PRO_0000048811" description="Homeobox protein aristaless">
    <location>
        <begin position="1"/>
        <end position="408"/>
    </location>
</feature>
<feature type="DNA-binding region" description="Homeobox" evidence="1">
    <location>
        <begin position="85"/>
        <end position="144"/>
    </location>
</feature>
<feature type="region of interest" description="Disordered" evidence="3">
    <location>
        <begin position="50"/>
        <end position="82"/>
    </location>
</feature>
<feature type="region of interest" description="Disordered" evidence="3">
    <location>
        <begin position="258"/>
        <end position="313"/>
    </location>
</feature>
<feature type="region of interest" description="Disordered" evidence="3">
    <location>
        <begin position="331"/>
        <end position="379"/>
    </location>
</feature>
<feature type="short sequence motif" description="OAR" evidence="2">
    <location>
        <begin position="378"/>
        <end position="391"/>
    </location>
</feature>
<feature type="compositionally biased region" description="Low complexity" evidence="3">
    <location>
        <begin position="287"/>
        <end position="296"/>
    </location>
</feature>
<feature type="compositionally biased region" description="Pro residues" evidence="3">
    <location>
        <begin position="297"/>
        <end position="308"/>
    </location>
</feature>
<feature type="compositionally biased region" description="Polar residues" evidence="3">
    <location>
        <begin position="331"/>
        <end position="352"/>
    </location>
</feature>
<feature type="compositionally biased region" description="Pro residues" evidence="3">
    <location>
        <begin position="353"/>
        <end position="369"/>
    </location>
</feature>
<feature type="sequence conflict" description="In Ref. 1; AAA28840." evidence="5" ref="1">
    <original>T</original>
    <variation>P</variation>
    <location>
        <position position="254"/>
    </location>
</feature>
<feature type="sequence conflict" description="In Ref. 1; AAA28840." evidence="5" ref="1">
    <original>H</original>
    <variation>Q</variation>
    <location>
        <position position="321"/>
    </location>
</feature>
<feature type="helix" evidence="6">
    <location>
        <begin position="94"/>
        <end position="106"/>
    </location>
</feature>
<feature type="helix" evidence="6">
    <location>
        <begin position="112"/>
        <end position="122"/>
    </location>
</feature>
<feature type="helix" evidence="6">
    <location>
        <begin position="126"/>
        <end position="140"/>
    </location>
</feature>
<dbReference type="EMBL" id="L08401">
    <property type="protein sequence ID" value="AAA28840.1"/>
    <property type="molecule type" value="mRNA"/>
</dbReference>
<dbReference type="EMBL" id="AE014134">
    <property type="protein sequence ID" value="AAF51505.1"/>
    <property type="molecule type" value="Genomic_DNA"/>
</dbReference>
<dbReference type="EMBL" id="AY121696">
    <property type="protein sequence ID" value="AAM52023.1"/>
    <property type="molecule type" value="mRNA"/>
</dbReference>
<dbReference type="PIR" id="A40685">
    <property type="entry name" value="A40685"/>
</dbReference>
<dbReference type="RefSeq" id="NP_722629.1">
    <property type="nucleotide sequence ID" value="NM_164382.2"/>
</dbReference>
<dbReference type="PDB" id="3A01">
    <property type="method" value="X-ray"/>
    <property type="resolution" value="2.70 A"/>
    <property type="chains" value="B/F=80-146"/>
</dbReference>
<dbReference type="PDB" id="3A02">
    <property type="method" value="X-ray"/>
    <property type="resolution" value="1.00 A"/>
    <property type="chains" value="A=91-146"/>
</dbReference>
<dbReference type="PDB" id="3LNQ">
    <property type="method" value="X-ray"/>
    <property type="resolution" value="2.25 A"/>
    <property type="chains" value="A=87-144"/>
</dbReference>
<dbReference type="PDBsum" id="3A01"/>
<dbReference type="PDBsum" id="3A02"/>
<dbReference type="PDBsum" id="3LNQ"/>
<dbReference type="SMR" id="Q06453"/>
<dbReference type="BioGRID" id="59464">
    <property type="interactions" value="24"/>
</dbReference>
<dbReference type="DIP" id="DIP-23247N"/>
<dbReference type="FunCoup" id="Q06453">
    <property type="interactions" value="14"/>
</dbReference>
<dbReference type="IntAct" id="Q06453">
    <property type="interactions" value="7"/>
</dbReference>
<dbReference type="MINT" id="Q06453"/>
<dbReference type="STRING" id="7227.FBpp0077713"/>
<dbReference type="PaxDb" id="7227-FBpp0077713"/>
<dbReference type="EnsemblMetazoa" id="FBtr0078053">
    <property type="protein sequence ID" value="FBpp0077713"/>
    <property type="gene ID" value="FBgn0000061"/>
</dbReference>
<dbReference type="GeneID" id="33208"/>
<dbReference type="KEGG" id="dme:Dmel_CG3935"/>
<dbReference type="UCSC" id="CG3935-RA">
    <property type="organism name" value="d. melanogaster"/>
</dbReference>
<dbReference type="AGR" id="FB:FBgn0000061"/>
<dbReference type="CTD" id="33208"/>
<dbReference type="FlyBase" id="FBgn0000061">
    <property type="gene designation" value="al"/>
</dbReference>
<dbReference type="VEuPathDB" id="VectorBase:FBgn0000061"/>
<dbReference type="eggNOG" id="KOG0490">
    <property type="taxonomic scope" value="Eukaryota"/>
</dbReference>
<dbReference type="GeneTree" id="ENSGT00940000165209"/>
<dbReference type="HOGENOM" id="CLU_816884_0_0_1"/>
<dbReference type="InParanoid" id="Q06453"/>
<dbReference type="OMA" id="MASMYSP"/>
<dbReference type="OrthoDB" id="6159439at2759"/>
<dbReference type="PhylomeDB" id="Q06453"/>
<dbReference type="BioGRID-ORCS" id="33208">
    <property type="hits" value="0 hits in 3 CRISPR screens"/>
</dbReference>
<dbReference type="EvolutionaryTrace" id="Q06453"/>
<dbReference type="GenomeRNAi" id="33208"/>
<dbReference type="PRO" id="PR:Q06453"/>
<dbReference type="Proteomes" id="UP000000803">
    <property type="component" value="Chromosome 2L"/>
</dbReference>
<dbReference type="Bgee" id="FBgn0000061">
    <property type="expression patterns" value="Expressed in embryonic head segment and 42 other cell types or tissues"/>
</dbReference>
<dbReference type="GO" id="GO:0005634">
    <property type="term" value="C:nucleus"/>
    <property type="evidence" value="ECO:0007669"/>
    <property type="project" value="UniProtKB-SubCell"/>
</dbReference>
<dbReference type="GO" id="GO:0032991">
    <property type="term" value="C:protein-containing complex"/>
    <property type="evidence" value="ECO:0000353"/>
    <property type="project" value="FlyBase"/>
</dbReference>
<dbReference type="GO" id="GO:0000981">
    <property type="term" value="F:DNA-binding transcription factor activity, RNA polymerase II-specific"/>
    <property type="evidence" value="ECO:0000318"/>
    <property type="project" value="GO_Central"/>
</dbReference>
<dbReference type="GO" id="GO:0000977">
    <property type="term" value="F:RNA polymerase II transcription regulatory region sequence-specific DNA binding"/>
    <property type="evidence" value="ECO:0000318"/>
    <property type="project" value="GO_Central"/>
</dbReference>
<dbReference type="GO" id="GO:0048800">
    <property type="term" value="P:antennal morphogenesis"/>
    <property type="evidence" value="ECO:0000315"/>
    <property type="project" value="FlyBase"/>
</dbReference>
<dbReference type="GO" id="GO:0022416">
    <property type="term" value="P:chaeta development"/>
    <property type="evidence" value="ECO:0000315"/>
    <property type="project" value="FlyBase"/>
</dbReference>
<dbReference type="GO" id="GO:0035015">
    <property type="term" value="P:elongation of arista core"/>
    <property type="evidence" value="ECO:0000315"/>
    <property type="project" value="FlyBase"/>
</dbReference>
<dbReference type="GO" id="GO:0007480">
    <property type="term" value="P:imaginal disc-derived leg morphogenesis"/>
    <property type="evidence" value="ECO:0000315"/>
    <property type="project" value="FlyBase"/>
</dbReference>
<dbReference type="GO" id="GO:0035218">
    <property type="term" value="P:leg disc development"/>
    <property type="evidence" value="ECO:0000315"/>
    <property type="project" value="FlyBase"/>
</dbReference>
<dbReference type="GO" id="GO:0045892">
    <property type="term" value="P:negative regulation of DNA-templated transcription"/>
    <property type="evidence" value="ECO:0000315"/>
    <property type="project" value="FlyBase"/>
</dbReference>
<dbReference type="GO" id="GO:0006357">
    <property type="term" value="P:regulation of transcription by RNA polymerase II"/>
    <property type="evidence" value="ECO:0000318"/>
    <property type="project" value="GO_Central"/>
</dbReference>
<dbReference type="CDD" id="cd00086">
    <property type="entry name" value="homeodomain"/>
    <property type="match status" value="1"/>
</dbReference>
<dbReference type="FunFam" id="1.10.10.60:FF:000102">
    <property type="entry name" value="Aristaless related homeobox"/>
    <property type="match status" value="1"/>
</dbReference>
<dbReference type="Gene3D" id="1.10.10.60">
    <property type="entry name" value="Homeodomain-like"/>
    <property type="match status" value="1"/>
</dbReference>
<dbReference type="InterPro" id="IPR001356">
    <property type="entry name" value="HD"/>
</dbReference>
<dbReference type="InterPro" id="IPR017970">
    <property type="entry name" value="Homeobox_CS"/>
</dbReference>
<dbReference type="InterPro" id="IPR009057">
    <property type="entry name" value="Homeodomain-like_sf"/>
</dbReference>
<dbReference type="InterPro" id="IPR000047">
    <property type="entry name" value="HTH_motif"/>
</dbReference>
<dbReference type="InterPro" id="IPR003654">
    <property type="entry name" value="OAR_dom"/>
</dbReference>
<dbReference type="InterPro" id="IPR050649">
    <property type="entry name" value="Paired_Homeobox_TFs"/>
</dbReference>
<dbReference type="PANTHER" id="PTHR24329">
    <property type="entry name" value="HOMEOBOX PROTEIN ARISTALESS"/>
    <property type="match status" value="1"/>
</dbReference>
<dbReference type="PANTHER" id="PTHR24329:SF579">
    <property type="entry name" value="HOMEOBOX PROTEIN ARISTALESS"/>
    <property type="match status" value="1"/>
</dbReference>
<dbReference type="Pfam" id="PF00046">
    <property type="entry name" value="Homeodomain"/>
    <property type="match status" value="1"/>
</dbReference>
<dbReference type="Pfam" id="PF03826">
    <property type="entry name" value="OAR"/>
    <property type="match status" value="1"/>
</dbReference>
<dbReference type="PRINTS" id="PR00031">
    <property type="entry name" value="HTHREPRESSR"/>
</dbReference>
<dbReference type="SMART" id="SM00389">
    <property type="entry name" value="HOX"/>
    <property type="match status" value="1"/>
</dbReference>
<dbReference type="SUPFAM" id="SSF46689">
    <property type="entry name" value="Homeodomain-like"/>
    <property type="match status" value="1"/>
</dbReference>
<dbReference type="PROSITE" id="PS00027">
    <property type="entry name" value="HOMEOBOX_1"/>
    <property type="match status" value="1"/>
</dbReference>
<dbReference type="PROSITE" id="PS50071">
    <property type="entry name" value="HOMEOBOX_2"/>
    <property type="match status" value="1"/>
</dbReference>
<dbReference type="PROSITE" id="PS50803">
    <property type="entry name" value="OAR"/>
    <property type="match status" value="1"/>
</dbReference>
<protein>
    <recommendedName>
        <fullName>Homeobox protein aristaless</fullName>
    </recommendedName>
</protein>
<accession>Q06453</accession>
<accession>Q9VPP1</accession>
<name>AL_DROME</name>
<comment type="function">
    <text evidence="4">Involved in the morphogenesis of proximal and distal pattern elements in a subset of appendages. Also has a role in early imaginal disk development.</text>
</comment>
<comment type="interaction">
    <interactant intactId="EBI-188244">
        <id>Q06453</id>
    </interactant>
    <interactant intactId="EBI-202590">
        <id>P83949</id>
        <label>Ubx</label>
    </interactant>
    <organismsDiffer>false</organismsDiffer>
    <experiments>3</experiments>
</comment>
<comment type="subcellular location">
    <subcellularLocation>
        <location evidence="1 2">Nucleus</location>
    </subcellularLocation>
</comment>
<comment type="tissue specificity">
    <text evidence="4">Expressed during embryonic development, in distinct epidermal patterns in head, thorax and abdomen and in an endodermal pattern in the anterior intestinal tract.</text>
</comment>
<comment type="developmental stage">
    <text evidence="4">First expressed in 4-8 hours old embryos, peaks in 8-12 hours old embryos and continues through development up to late larval stage. In the head region, detected at stage 10 in the maxillary and labial segment primordia, and in later stages, in the prospective antennal and mandibular segment. In the epidermis, expression is seen from stage 11 in thoracic and abdominal lateral patches. Expression in the intestinal tract begins at stage 13, continues through stages 14 and 15 in the endoderm of the anterior midgut and at stage 16, is found in the posterior end. Expression in the imaginal disks is seen from late third-instar larvae in the prospective thorax, claw organ, antenna, scutellum and wing blade.</text>
</comment>
<comment type="disruption phenotype">
    <text evidence="4">Flies display a reduction in size of the arista and scutellum, a reduction or complete absence of the tarsal claws, irregularities of the sternopleural bristles and of the wing vein, and a bending of the wing blade.</text>
</comment>
<comment type="similarity">
    <text evidence="5">Belongs to the paired homeobox family.</text>
</comment>
<proteinExistence type="evidence at protein level"/>
<organism>
    <name type="scientific">Drosophila melanogaster</name>
    <name type="common">Fruit fly</name>
    <dbReference type="NCBI Taxonomy" id="7227"/>
    <lineage>
        <taxon>Eukaryota</taxon>
        <taxon>Metazoa</taxon>
        <taxon>Ecdysozoa</taxon>
        <taxon>Arthropoda</taxon>
        <taxon>Hexapoda</taxon>
        <taxon>Insecta</taxon>
        <taxon>Pterygota</taxon>
        <taxon>Neoptera</taxon>
        <taxon>Endopterygota</taxon>
        <taxon>Diptera</taxon>
        <taxon>Brachycera</taxon>
        <taxon>Muscomorpha</taxon>
        <taxon>Ephydroidea</taxon>
        <taxon>Drosophilidae</taxon>
        <taxon>Drosophila</taxon>
        <taxon>Sophophora</taxon>
    </lineage>
</organism>
<sequence>MGISEEIKLEELPQEAKLAHPDAVVLVDRAPGSSAASAGAALTVSMSVSGGAPSGASGASGGTNSPVSDGNSDCEADEYAPKRKQRRYRTTFTSFQLEELEKAFSRTHYPDVFTREELAMKIGLTEARIQVWFQNRRAKWRKQEKVGPQSHPYNPYLPGGAATMQTVVGAALPPNPFTHLGFQLRKPFDAQHAANLAAFRYPHLSAAPMIPSGYFNQFQRAPPHMLPHGMAGMYSPSSSFQSLLANMTAVPRGTPLGKPPALLVGSPDLHSPNHMLASPPTSPASGHASQHQQHPTAHPPPPQAPPQMPVGVQPAQLSPQHLVGIALTQQASSLSPTQTSPVALTLSHSPQRQLPPPSHQAPPPPPRAATPPEDRRTSSIAALRLKAREHELKLELLRQNGHGNDVVS</sequence>
<evidence type="ECO:0000255" key="1">
    <source>
        <dbReference type="PROSITE-ProRule" id="PRU00108"/>
    </source>
</evidence>
<evidence type="ECO:0000255" key="2">
    <source>
        <dbReference type="PROSITE-ProRule" id="PRU00138"/>
    </source>
</evidence>
<evidence type="ECO:0000256" key="3">
    <source>
        <dbReference type="SAM" id="MobiDB-lite"/>
    </source>
</evidence>
<evidence type="ECO:0000269" key="4">
    <source>
    </source>
</evidence>
<evidence type="ECO:0000305" key="5"/>
<evidence type="ECO:0007829" key="6">
    <source>
        <dbReference type="PDB" id="3A02"/>
    </source>
</evidence>